<protein>
    <recommendedName>
        <fullName evidence="1">Ribose-5-phosphate isomerase A</fullName>
        <ecNumber evidence="1">5.3.1.6</ecNumber>
    </recommendedName>
    <alternativeName>
        <fullName evidence="1">Phosphoriboisomerase A</fullName>
        <shortName evidence="1">PRI</shortName>
    </alternativeName>
</protein>
<gene>
    <name evidence="1" type="primary">rpiA</name>
    <name type="ordered locus">STY3219</name>
    <name type="ordered locus">t2981</name>
</gene>
<feature type="chain" id="PRO_0000158458" description="Ribose-5-phosphate isomerase A">
    <location>
        <begin position="1"/>
        <end position="219"/>
    </location>
</feature>
<feature type="active site" description="Proton acceptor" evidence="1">
    <location>
        <position position="103"/>
    </location>
</feature>
<feature type="binding site" evidence="1">
    <location>
        <begin position="28"/>
        <end position="31"/>
    </location>
    <ligand>
        <name>substrate</name>
    </ligand>
</feature>
<feature type="binding site" evidence="1">
    <location>
        <begin position="81"/>
        <end position="84"/>
    </location>
    <ligand>
        <name>substrate</name>
    </ligand>
</feature>
<feature type="binding site" evidence="1">
    <location>
        <begin position="94"/>
        <end position="97"/>
    </location>
    <ligand>
        <name>substrate</name>
    </ligand>
</feature>
<feature type="binding site" evidence="1">
    <location>
        <position position="121"/>
    </location>
    <ligand>
        <name>substrate</name>
    </ligand>
</feature>
<name>RPIA_SALTI</name>
<comment type="function">
    <text evidence="1">Catalyzes the reversible conversion of ribose-5-phosphate to ribulose 5-phosphate.</text>
</comment>
<comment type="catalytic activity">
    <reaction evidence="1">
        <text>aldehydo-D-ribose 5-phosphate = D-ribulose 5-phosphate</text>
        <dbReference type="Rhea" id="RHEA:14657"/>
        <dbReference type="ChEBI" id="CHEBI:58121"/>
        <dbReference type="ChEBI" id="CHEBI:58273"/>
        <dbReference type="EC" id="5.3.1.6"/>
    </reaction>
</comment>
<comment type="pathway">
    <text evidence="1">Carbohydrate degradation; pentose phosphate pathway; D-ribose 5-phosphate from D-ribulose 5-phosphate (non-oxidative stage): step 1/1.</text>
</comment>
<comment type="subunit">
    <text evidence="1">Homodimer.</text>
</comment>
<comment type="similarity">
    <text evidence="1">Belongs to the ribose 5-phosphate isomerase family.</text>
</comment>
<organism>
    <name type="scientific">Salmonella typhi</name>
    <dbReference type="NCBI Taxonomy" id="90370"/>
    <lineage>
        <taxon>Bacteria</taxon>
        <taxon>Pseudomonadati</taxon>
        <taxon>Pseudomonadota</taxon>
        <taxon>Gammaproteobacteria</taxon>
        <taxon>Enterobacterales</taxon>
        <taxon>Enterobacteriaceae</taxon>
        <taxon>Salmonella</taxon>
    </lineage>
</organism>
<keyword id="KW-0413">Isomerase</keyword>
<evidence type="ECO:0000255" key="1">
    <source>
        <dbReference type="HAMAP-Rule" id="MF_00170"/>
    </source>
</evidence>
<accession>P66693</accession>
<accession>Q8XEK1</accession>
<sequence>MTQDELKKAVGWAALQYVQPGTIVGVGTGSTAAHFIDALGTMKGQIEGAVSSSDASTEKLKGLGIHVFDLNEVDSLGIYVDGADEINGHMQMIKGGGAALTREKIIASVAEKFICIADASKQVDILGKFPLPVEVIPMARSAVARQLVKLGGRPEYRQNVVTDNGNVILDVYGMEILDPIALENAINAIPGVVTVGLFANRGADVALIGTPDGVKTIVK</sequence>
<reference key="1">
    <citation type="journal article" date="2001" name="Nature">
        <title>Complete genome sequence of a multiple drug resistant Salmonella enterica serovar Typhi CT18.</title>
        <authorList>
            <person name="Parkhill J."/>
            <person name="Dougan G."/>
            <person name="James K.D."/>
            <person name="Thomson N.R."/>
            <person name="Pickard D."/>
            <person name="Wain J."/>
            <person name="Churcher C.M."/>
            <person name="Mungall K.L."/>
            <person name="Bentley S.D."/>
            <person name="Holden M.T.G."/>
            <person name="Sebaihia M."/>
            <person name="Baker S."/>
            <person name="Basham D."/>
            <person name="Brooks K."/>
            <person name="Chillingworth T."/>
            <person name="Connerton P."/>
            <person name="Cronin A."/>
            <person name="Davis P."/>
            <person name="Davies R.M."/>
            <person name="Dowd L."/>
            <person name="White N."/>
            <person name="Farrar J."/>
            <person name="Feltwell T."/>
            <person name="Hamlin N."/>
            <person name="Haque A."/>
            <person name="Hien T.T."/>
            <person name="Holroyd S."/>
            <person name="Jagels K."/>
            <person name="Krogh A."/>
            <person name="Larsen T.S."/>
            <person name="Leather S."/>
            <person name="Moule S."/>
            <person name="O'Gaora P."/>
            <person name="Parry C."/>
            <person name="Quail M.A."/>
            <person name="Rutherford K.M."/>
            <person name="Simmonds M."/>
            <person name="Skelton J."/>
            <person name="Stevens K."/>
            <person name="Whitehead S."/>
            <person name="Barrell B.G."/>
        </authorList>
    </citation>
    <scope>NUCLEOTIDE SEQUENCE [LARGE SCALE GENOMIC DNA]</scope>
    <source>
        <strain>CT18</strain>
    </source>
</reference>
<reference key="2">
    <citation type="journal article" date="2003" name="J. Bacteriol.">
        <title>Comparative genomics of Salmonella enterica serovar Typhi strains Ty2 and CT18.</title>
        <authorList>
            <person name="Deng W."/>
            <person name="Liou S.-R."/>
            <person name="Plunkett G. III"/>
            <person name="Mayhew G.F."/>
            <person name="Rose D.J."/>
            <person name="Burland V."/>
            <person name="Kodoyianni V."/>
            <person name="Schwartz D.C."/>
            <person name="Blattner F.R."/>
        </authorList>
    </citation>
    <scope>NUCLEOTIDE SEQUENCE [LARGE SCALE GENOMIC DNA]</scope>
    <source>
        <strain>ATCC 700931 / Ty2</strain>
    </source>
</reference>
<dbReference type="EC" id="5.3.1.6" evidence="1"/>
<dbReference type="EMBL" id="AL513382">
    <property type="protein sequence ID" value="CAD02893.1"/>
    <property type="molecule type" value="Genomic_DNA"/>
</dbReference>
<dbReference type="EMBL" id="AE014613">
    <property type="protein sequence ID" value="AAO70533.1"/>
    <property type="molecule type" value="Genomic_DNA"/>
</dbReference>
<dbReference type="RefSeq" id="NP_457461.1">
    <property type="nucleotide sequence ID" value="NC_003198.1"/>
</dbReference>
<dbReference type="RefSeq" id="WP_000189741.1">
    <property type="nucleotide sequence ID" value="NZ_WSUR01000024.1"/>
</dbReference>
<dbReference type="SMR" id="P66693"/>
<dbReference type="STRING" id="220341.gene:17587095"/>
<dbReference type="KEGG" id="stt:t2981"/>
<dbReference type="KEGG" id="sty:STY3219"/>
<dbReference type="PATRIC" id="fig|220341.7.peg.3280"/>
<dbReference type="eggNOG" id="COG0120">
    <property type="taxonomic scope" value="Bacteria"/>
</dbReference>
<dbReference type="HOGENOM" id="CLU_056590_1_1_6"/>
<dbReference type="OMA" id="ACHVQEK"/>
<dbReference type="OrthoDB" id="5870696at2"/>
<dbReference type="UniPathway" id="UPA00115">
    <property type="reaction ID" value="UER00412"/>
</dbReference>
<dbReference type="Proteomes" id="UP000000541">
    <property type="component" value="Chromosome"/>
</dbReference>
<dbReference type="Proteomes" id="UP000002670">
    <property type="component" value="Chromosome"/>
</dbReference>
<dbReference type="GO" id="GO:0005829">
    <property type="term" value="C:cytosol"/>
    <property type="evidence" value="ECO:0007669"/>
    <property type="project" value="TreeGrafter"/>
</dbReference>
<dbReference type="GO" id="GO:0004751">
    <property type="term" value="F:ribose-5-phosphate isomerase activity"/>
    <property type="evidence" value="ECO:0007669"/>
    <property type="project" value="UniProtKB-UniRule"/>
</dbReference>
<dbReference type="GO" id="GO:0006014">
    <property type="term" value="P:D-ribose metabolic process"/>
    <property type="evidence" value="ECO:0007669"/>
    <property type="project" value="TreeGrafter"/>
</dbReference>
<dbReference type="GO" id="GO:0009052">
    <property type="term" value="P:pentose-phosphate shunt, non-oxidative branch"/>
    <property type="evidence" value="ECO:0007669"/>
    <property type="project" value="UniProtKB-UniRule"/>
</dbReference>
<dbReference type="CDD" id="cd01398">
    <property type="entry name" value="RPI_A"/>
    <property type="match status" value="1"/>
</dbReference>
<dbReference type="FunFam" id="3.30.70.260:FF:000004">
    <property type="entry name" value="Ribose-5-phosphate isomerase A"/>
    <property type="match status" value="1"/>
</dbReference>
<dbReference type="FunFam" id="3.40.50.1360:FF:000001">
    <property type="entry name" value="Ribose-5-phosphate isomerase A"/>
    <property type="match status" value="1"/>
</dbReference>
<dbReference type="Gene3D" id="3.30.70.260">
    <property type="match status" value="1"/>
</dbReference>
<dbReference type="Gene3D" id="3.40.50.1360">
    <property type="match status" value="1"/>
</dbReference>
<dbReference type="HAMAP" id="MF_00170">
    <property type="entry name" value="Rib_5P_isom_A"/>
    <property type="match status" value="1"/>
</dbReference>
<dbReference type="InterPro" id="IPR037171">
    <property type="entry name" value="NagB/RpiA_transferase-like"/>
</dbReference>
<dbReference type="InterPro" id="IPR020672">
    <property type="entry name" value="Ribose5P_isomerase_typA_subgr"/>
</dbReference>
<dbReference type="InterPro" id="IPR004788">
    <property type="entry name" value="Ribose5P_isomerase_type_A"/>
</dbReference>
<dbReference type="NCBIfam" id="NF001924">
    <property type="entry name" value="PRK00702.1"/>
    <property type="match status" value="1"/>
</dbReference>
<dbReference type="NCBIfam" id="TIGR00021">
    <property type="entry name" value="rpiA"/>
    <property type="match status" value="1"/>
</dbReference>
<dbReference type="PANTHER" id="PTHR11934">
    <property type="entry name" value="RIBOSE-5-PHOSPHATE ISOMERASE"/>
    <property type="match status" value="1"/>
</dbReference>
<dbReference type="PANTHER" id="PTHR11934:SF0">
    <property type="entry name" value="RIBOSE-5-PHOSPHATE ISOMERASE"/>
    <property type="match status" value="1"/>
</dbReference>
<dbReference type="Pfam" id="PF06026">
    <property type="entry name" value="Rib_5-P_isom_A"/>
    <property type="match status" value="1"/>
</dbReference>
<dbReference type="SUPFAM" id="SSF75445">
    <property type="entry name" value="D-ribose-5-phosphate isomerase (RpiA), lid domain"/>
    <property type="match status" value="1"/>
</dbReference>
<dbReference type="SUPFAM" id="SSF100950">
    <property type="entry name" value="NagB/RpiA/CoA transferase-like"/>
    <property type="match status" value="1"/>
</dbReference>
<proteinExistence type="inferred from homology"/>